<comment type="function">
    <text evidence="1">NQR complex catalyzes the reduction of ubiquinone-1 to ubiquinol by two successive reactions, coupled with the transport of Na(+) ions from the cytoplasm to the periplasm. NqrA to NqrE are probably involved in the second step, the conversion of ubisemiquinone to ubiquinol.</text>
</comment>
<comment type="catalytic activity">
    <reaction evidence="1">
        <text>a ubiquinone + n Na(+)(in) + NADH + H(+) = a ubiquinol + n Na(+)(out) + NAD(+)</text>
        <dbReference type="Rhea" id="RHEA:47748"/>
        <dbReference type="Rhea" id="RHEA-COMP:9565"/>
        <dbReference type="Rhea" id="RHEA-COMP:9566"/>
        <dbReference type="ChEBI" id="CHEBI:15378"/>
        <dbReference type="ChEBI" id="CHEBI:16389"/>
        <dbReference type="ChEBI" id="CHEBI:17976"/>
        <dbReference type="ChEBI" id="CHEBI:29101"/>
        <dbReference type="ChEBI" id="CHEBI:57540"/>
        <dbReference type="ChEBI" id="CHEBI:57945"/>
        <dbReference type="EC" id="7.2.1.1"/>
    </reaction>
</comment>
<comment type="cofactor">
    <cofactor evidence="1">
        <name>FMN</name>
        <dbReference type="ChEBI" id="CHEBI:58210"/>
    </cofactor>
</comment>
<comment type="subunit">
    <text evidence="1">Composed of six subunits; NqrA, NqrB, NqrC, NqrD, NqrE and NqrF.</text>
</comment>
<comment type="subcellular location">
    <subcellularLocation>
        <location evidence="1">Cell inner membrane</location>
        <topology evidence="1">Multi-pass membrane protein</topology>
    </subcellularLocation>
</comment>
<comment type="similarity">
    <text evidence="1">Belongs to the NqrB/RnfD family.</text>
</comment>
<gene>
    <name evidence="1" type="primary">nqrB</name>
    <name type="ordered locus">CF0642</name>
</gene>
<name>NQRB_CHLFF</name>
<sequence>MLKRFVNSIWEICQKDKFQRFTPVADAIDTFCYEPIHKSSSPPFIRDAVDVKRWMILVVVALFPATFSAIWNSGVQSLVYGSGNAQLMEAFLHISGFRSYLSFIFHDVGVFSVLWAGYKIFLPLLIISYSVGGACEVLFAVIRKHKIAEGLLVTGILYPLTLPPTIPYWMAALGIAFGVVVSKELFGGTGMNILNPALSGRAFLFFSFPAKMSGDVWVGSNPMKIKESLLAMNSTAGKSIIDGFSQSTCLHTLNSTPPSVKRVHVDAIASNILHMTHVPTQNVIQSQFSIWTESHPGLMLDKLTLEQLQSFVTSPLSEGGLGLLPTQFDSAYAITDVIYGIGKFSSGNLFWGNIVGSLGETSTFACLLGAIFLIVTGIASWRTMVSFGIGAFVTAWLFKIVSILIVGKHGAWAPARFFIPAYRQLFLGGLAFGLVFMATDPVSSPTMKLAKWIYGLFIGFMTILIRLINPAYPEGVMLAILLGNVFAPLLDYFAVRKYRRRRI</sequence>
<reference key="1">
    <citation type="journal article" date="2006" name="DNA Res.">
        <title>Genome sequence of the cat pathogen, Chlamydophila felis.</title>
        <authorList>
            <person name="Azuma Y."/>
            <person name="Hirakawa H."/>
            <person name="Yamashita A."/>
            <person name="Cai Y."/>
            <person name="Rahman M.A."/>
            <person name="Suzuki H."/>
            <person name="Mitaku S."/>
            <person name="Toh H."/>
            <person name="Goto S."/>
            <person name="Murakami T."/>
            <person name="Sugi K."/>
            <person name="Hayashi H."/>
            <person name="Fukushi H."/>
            <person name="Hattori M."/>
            <person name="Kuhara S."/>
            <person name="Shirai M."/>
        </authorList>
    </citation>
    <scope>NUCLEOTIDE SEQUENCE [LARGE SCALE GENOMIC DNA]</scope>
    <source>
        <strain>Fe/C-56</strain>
    </source>
</reference>
<dbReference type="EC" id="7.2.1.1" evidence="1"/>
<dbReference type="EMBL" id="AP006861">
    <property type="protein sequence ID" value="BAE81414.1"/>
    <property type="molecule type" value="Genomic_DNA"/>
</dbReference>
<dbReference type="RefSeq" id="WP_011458193.1">
    <property type="nucleotide sequence ID" value="NC_007899.1"/>
</dbReference>
<dbReference type="SMR" id="Q253X4"/>
<dbReference type="STRING" id="264202.CF0642"/>
<dbReference type="KEGG" id="cfe:CF0642"/>
<dbReference type="eggNOG" id="COG1805">
    <property type="taxonomic scope" value="Bacteria"/>
</dbReference>
<dbReference type="HOGENOM" id="CLU_042020_1_1_0"/>
<dbReference type="OrthoDB" id="9776359at2"/>
<dbReference type="Proteomes" id="UP000001260">
    <property type="component" value="Chromosome"/>
</dbReference>
<dbReference type="GO" id="GO:0005886">
    <property type="term" value="C:plasma membrane"/>
    <property type="evidence" value="ECO:0007669"/>
    <property type="project" value="UniProtKB-SubCell"/>
</dbReference>
<dbReference type="GO" id="GO:0010181">
    <property type="term" value="F:FMN binding"/>
    <property type="evidence" value="ECO:0007669"/>
    <property type="project" value="InterPro"/>
</dbReference>
<dbReference type="GO" id="GO:0016655">
    <property type="term" value="F:oxidoreductase activity, acting on NAD(P)H, quinone or similar compound as acceptor"/>
    <property type="evidence" value="ECO:0007669"/>
    <property type="project" value="UniProtKB-UniRule"/>
</dbReference>
<dbReference type="GO" id="GO:0022904">
    <property type="term" value="P:respiratory electron transport chain"/>
    <property type="evidence" value="ECO:0007669"/>
    <property type="project" value="InterPro"/>
</dbReference>
<dbReference type="GO" id="GO:0006814">
    <property type="term" value="P:sodium ion transport"/>
    <property type="evidence" value="ECO:0007669"/>
    <property type="project" value="UniProtKB-UniRule"/>
</dbReference>
<dbReference type="GO" id="GO:0055085">
    <property type="term" value="P:transmembrane transport"/>
    <property type="evidence" value="ECO:0007669"/>
    <property type="project" value="InterPro"/>
</dbReference>
<dbReference type="HAMAP" id="MF_00426">
    <property type="entry name" value="NqrB"/>
    <property type="match status" value="1"/>
</dbReference>
<dbReference type="InterPro" id="IPR010966">
    <property type="entry name" value="NqrB"/>
</dbReference>
<dbReference type="InterPro" id="IPR004338">
    <property type="entry name" value="NqrB/RnfD"/>
</dbReference>
<dbReference type="NCBIfam" id="TIGR01937">
    <property type="entry name" value="nqrB"/>
    <property type="match status" value="1"/>
</dbReference>
<dbReference type="NCBIfam" id="NF002181">
    <property type="entry name" value="PRK01024.1"/>
    <property type="match status" value="1"/>
</dbReference>
<dbReference type="PANTHER" id="PTHR30578">
    <property type="entry name" value="ELECTRON TRANSPORT COMPLEX PROTEIN RNFD"/>
    <property type="match status" value="1"/>
</dbReference>
<dbReference type="PANTHER" id="PTHR30578:SF1">
    <property type="entry name" value="NA(+)-TRANSLOCATING NADH-QUINONE REDUCTASE SUBUNIT B"/>
    <property type="match status" value="1"/>
</dbReference>
<dbReference type="Pfam" id="PF03116">
    <property type="entry name" value="NQR2_RnfD_RnfE"/>
    <property type="match status" value="1"/>
</dbReference>
<feature type="chain" id="PRO_1000060135" description="Na(+)-translocating NADH-quinone reductase subunit B">
    <location>
        <begin position="1"/>
        <end position="503"/>
    </location>
</feature>
<feature type="transmembrane region" description="Helical" evidence="1">
    <location>
        <begin position="55"/>
        <end position="75"/>
    </location>
</feature>
<feature type="transmembrane region" description="Helical" evidence="1">
    <location>
        <begin position="120"/>
        <end position="142"/>
    </location>
</feature>
<feature type="transmembrane region" description="Helical" evidence="1">
    <location>
        <begin position="161"/>
        <end position="181"/>
    </location>
</feature>
<feature type="transmembrane region" description="Helical" evidence="1">
    <location>
        <begin position="186"/>
        <end position="206"/>
    </location>
</feature>
<feature type="transmembrane region" description="Helical" evidence="1">
    <location>
        <begin position="361"/>
        <end position="381"/>
    </location>
</feature>
<feature type="transmembrane region" description="Helical" evidence="1">
    <location>
        <begin position="387"/>
        <end position="407"/>
    </location>
</feature>
<feature type="transmembrane region" description="Helical" evidence="1">
    <location>
        <begin position="417"/>
        <end position="437"/>
    </location>
</feature>
<feature type="transmembrane region" description="Helical" evidence="1">
    <location>
        <begin position="452"/>
        <end position="472"/>
    </location>
</feature>
<feature type="transmembrane region" description="Helical" evidence="1">
    <location>
        <begin position="475"/>
        <end position="495"/>
    </location>
</feature>
<feature type="modified residue" description="FMN phosphoryl threonine" evidence="1">
    <location>
        <position position="248"/>
    </location>
</feature>
<keyword id="KW-0997">Cell inner membrane</keyword>
<keyword id="KW-1003">Cell membrane</keyword>
<keyword id="KW-0285">Flavoprotein</keyword>
<keyword id="KW-0288">FMN</keyword>
<keyword id="KW-0406">Ion transport</keyword>
<keyword id="KW-0472">Membrane</keyword>
<keyword id="KW-0520">NAD</keyword>
<keyword id="KW-0597">Phosphoprotein</keyword>
<keyword id="KW-0915">Sodium</keyword>
<keyword id="KW-0739">Sodium transport</keyword>
<keyword id="KW-1278">Translocase</keyword>
<keyword id="KW-0812">Transmembrane</keyword>
<keyword id="KW-1133">Transmembrane helix</keyword>
<keyword id="KW-0813">Transport</keyword>
<keyword id="KW-0830">Ubiquinone</keyword>
<organism>
    <name type="scientific">Chlamydia felis (strain Fe/C-56)</name>
    <name type="common">Chlamydophila felis</name>
    <dbReference type="NCBI Taxonomy" id="264202"/>
    <lineage>
        <taxon>Bacteria</taxon>
        <taxon>Pseudomonadati</taxon>
        <taxon>Chlamydiota</taxon>
        <taxon>Chlamydiia</taxon>
        <taxon>Chlamydiales</taxon>
        <taxon>Chlamydiaceae</taxon>
        <taxon>Chlamydia/Chlamydophila group</taxon>
        <taxon>Chlamydia</taxon>
    </lineage>
</organism>
<accession>Q253X4</accession>
<proteinExistence type="inferred from homology"/>
<protein>
    <recommendedName>
        <fullName evidence="1">Na(+)-translocating NADH-quinone reductase subunit B</fullName>
        <shortName evidence="1">Na(+)-NQR subunit B</shortName>
        <shortName evidence="1">Na(+)-translocating NQR subunit B</shortName>
        <ecNumber evidence="1">7.2.1.1</ecNumber>
    </recommendedName>
    <alternativeName>
        <fullName evidence="1">NQR complex subunit B</fullName>
    </alternativeName>
    <alternativeName>
        <fullName evidence="1">NQR-1 subunit B</fullName>
    </alternativeName>
</protein>
<evidence type="ECO:0000255" key="1">
    <source>
        <dbReference type="HAMAP-Rule" id="MF_00426"/>
    </source>
</evidence>